<proteinExistence type="evidence at protein level"/>
<gene>
    <name type="primary">ZSWIM7</name>
    <name type="synonym">SWS1</name>
</gene>
<dbReference type="EMBL" id="DQ530600">
    <property type="protein sequence ID" value="ABF72190.1"/>
    <property type="molecule type" value="mRNA"/>
</dbReference>
<dbReference type="CCDS" id="CCDS42266.1"/>
<dbReference type="RefSeq" id="NP_001036162.1">
    <property type="nucleotide sequence ID" value="NM_001042697.2"/>
</dbReference>
<dbReference type="RefSeq" id="NP_001036163.1">
    <property type="nucleotide sequence ID" value="NM_001042698.2"/>
</dbReference>
<dbReference type="RefSeq" id="XP_047291320.1">
    <property type="nucleotide sequence ID" value="XM_047435364.1"/>
</dbReference>
<dbReference type="RefSeq" id="XP_054171051.1">
    <property type="nucleotide sequence ID" value="XM_054315076.1"/>
</dbReference>
<dbReference type="BioGRID" id="125919">
    <property type="interactions" value="17"/>
</dbReference>
<dbReference type="ComplexPortal" id="CPX-2186">
    <property type="entry name" value="SHU complex"/>
</dbReference>
<dbReference type="CORUM" id="Q19AV6"/>
<dbReference type="FunCoup" id="Q19AV6">
    <property type="interactions" value="22"/>
</dbReference>
<dbReference type="IntAct" id="Q19AV6">
    <property type="interactions" value="27"/>
</dbReference>
<dbReference type="STRING" id="9606.ENSP00000382218"/>
<dbReference type="iPTMnet" id="Q19AV6"/>
<dbReference type="PhosphoSitePlus" id="Q19AV6"/>
<dbReference type="BioMuta" id="ZSWIM7"/>
<dbReference type="DMDM" id="121940600"/>
<dbReference type="jPOST" id="Q19AV6"/>
<dbReference type="MassIVE" id="Q19AV6"/>
<dbReference type="PaxDb" id="9606-ENSP00000382218"/>
<dbReference type="PeptideAtlas" id="Q19AV6"/>
<dbReference type="ProteomicsDB" id="61179"/>
<dbReference type="Pumba" id="Q19AV6"/>
<dbReference type="Antibodypedia" id="58364">
    <property type="antibodies" value="13 antibodies from 7 providers"/>
</dbReference>
<dbReference type="DNASU" id="125150"/>
<dbReference type="Ensembl" id="ENST00000399277.6">
    <property type="protein sequence ID" value="ENSP00000382218.1"/>
    <property type="gene ID" value="ENSG00000214941.8"/>
</dbReference>
<dbReference type="Ensembl" id="ENST00000472495.5">
    <property type="protein sequence ID" value="ENSP00000419138.1"/>
    <property type="gene ID" value="ENSG00000214941.8"/>
</dbReference>
<dbReference type="GeneID" id="125150"/>
<dbReference type="KEGG" id="hsa:125150"/>
<dbReference type="MANE-Select" id="ENST00000399277.6">
    <property type="protein sequence ID" value="ENSP00000382218.1"/>
    <property type="RefSeq nucleotide sequence ID" value="NM_001042697.2"/>
    <property type="RefSeq protein sequence ID" value="NP_001036162.1"/>
</dbReference>
<dbReference type="UCSC" id="uc002gpe.4">
    <property type="organism name" value="human"/>
</dbReference>
<dbReference type="AGR" id="HGNC:26993"/>
<dbReference type="CTD" id="125150"/>
<dbReference type="DisGeNET" id="125150"/>
<dbReference type="GeneCards" id="ZSWIM7"/>
<dbReference type="HGNC" id="HGNC:26993">
    <property type="gene designation" value="ZSWIM7"/>
</dbReference>
<dbReference type="HPA" id="ENSG00000214941">
    <property type="expression patterns" value="Low tissue specificity"/>
</dbReference>
<dbReference type="MalaCards" id="ZSWIM7"/>
<dbReference type="MIM" id="614535">
    <property type="type" value="gene"/>
</dbReference>
<dbReference type="MIM" id="619831">
    <property type="type" value="phenotype"/>
</dbReference>
<dbReference type="MIM" id="619834">
    <property type="type" value="phenotype"/>
</dbReference>
<dbReference type="neXtProt" id="NX_Q19AV6"/>
<dbReference type="OpenTargets" id="ENSG00000214941"/>
<dbReference type="Orphanet" id="243">
    <property type="disease" value="46,XX gonadal dysgenesis"/>
</dbReference>
<dbReference type="PharmGKB" id="PA162411055"/>
<dbReference type="VEuPathDB" id="HostDB:ENSG00000214941"/>
<dbReference type="eggNOG" id="ENOG502RZB5">
    <property type="taxonomic scope" value="Eukaryota"/>
</dbReference>
<dbReference type="GeneTree" id="ENSGT00390000017523"/>
<dbReference type="HOGENOM" id="CLU_132858_0_1_1"/>
<dbReference type="InParanoid" id="Q19AV6"/>
<dbReference type="OMA" id="YTCYTSC"/>
<dbReference type="OrthoDB" id="337581at2759"/>
<dbReference type="PAN-GO" id="Q19AV6">
    <property type="GO annotations" value="2 GO annotations based on evolutionary models"/>
</dbReference>
<dbReference type="PhylomeDB" id="Q19AV6"/>
<dbReference type="TreeFam" id="TF339438"/>
<dbReference type="PathwayCommons" id="Q19AV6"/>
<dbReference type="SignaLink" id="Q19AV6"/>
<dbReference type="BioGRID-ORCS" id="125150">
    <property type="hits" value="47 hits in 1151 CRISPR screens"/>
</dbReference>
<dbReference type="ChiTaRS" id="ZSWIM7">
    <property type="organism name" value="human"/>
</dbReference>
<dbReference type="GenomeRNAi" id="125150"/>
<dbReference type="Pharos" id="Q19AV6">
    <property type="development level" value="Tbio"/>
</dbReference>
<dbReference type="PRO" id="PR:Q19AV6"/>
<dbReference type="Proteomes" id="UP000005640">
    <property type="component" value="Chromosome 17"/>
</dbReference>
<dbReference type="RNAct" id="Q19AV6">
    <property type="molecule type" value="protein"/>
</dbReference>
<dbReference type="Bgee" id="ENSG00000214941">
    <property type="expression patterns" value="Expressed in tendon of biceps brachii and 182 other cell types or tissues"/>
</dbReference>
<dbReference type="ExpressionAtlas" id="Q19AV6">
    <property type="expression patterns" value="baseline and differential"/>
</dbReference>
<dbReference type="GO" id="GO:0005634">
    <property type="term" value="C:nucleus"/>
    <property type="evidence" value="ECO:0007669"/>
    <property type="project" value="UniProtKB-SubCell"/>
</dbReference>
<dbReference type="GO" id="GO:0097196">
    <property type="term" value="C:Shu complex"/>
    <property type="evidence" value="ECO:0000314"/>
    <property type="project" value="UniProtKB"/>
</dbReference>
<dbReference type="GO" id="GO:0008270">
    <property type="term" value="F:zinc ion binding"/>
    <property type="evidence" value="ECO:0007669"/>
    <property type="project" value="UniProtKB-KW"/>
</dbReference>
<dbReference type="GO" id="GO:0000724">
    <property type="term" value="P:double-strand break repair via homologous recombination"/>
    <property type="evidence" value="ECO:0000315"/>
    <property type="project" value="UniProtKB"/>
</dbReference>
<dbReference type="GO" id="GO:0050821">
    <property type="term" value="P:protein stabilization"/>
    <property type="evidence" value="ECO:0000315"/>
    <property type="project" value="UniProtKB"/>
</dbReference>
<dbReference type="InterPro" id="IPR007527">
    <property type="entry name" value="Znf_SWIM"/>
</dbReference>
<dbReference type="PANTHER" id="PTHR28498">
    <property type="entry name" value="ZINC FINGER SWIM DOMAIN-CONTAINING PROTEIN 7"/>
    <property type="match status" value="1"/>
</dbReference>
<dbReference type="PANTHER" id="PTHR28498:SF1">
    <property type="entry name" value="ZINC FINGER SWIM DOMAIN-CONTAINING PROTEIN 7"/>
    <property type="match status" value="1"/>
</dbReference>
<dbReference type="Pfam" id="PF04434">
    <property type="entry name" value="SWIM"/>
    <property type="match status" value="1"/>
</dbReference>
<dbReference type="PROSITE" id="PS50966">
    <property type="entry name" value="ZF_SWIM"/>
    <property type="match status" value="1"/>
</dbReference>
<organism>
    <name type="scientific">Homo sapiens</name>
    <name type="common">Human</name>
    <dbReference type="NCBI Taxonomy" id="9606"/>
    <lineage>
        <taxon>Eukaryota</taxon>
        <taxon>Metazoa</taxon>
        <taxon>Chordata</taxon>
        <taxon>Craniata</taxon>
        <taxon>Vertebrata</taxon>
        <taxon>Euteleostomi</taxon>
        <taxon>Mammalia</taxon>
        <taxon>Eutheria</taxon>
        <taxon>Euarchontoglires</taxon>
        <taxon>Primates</taxon>
        <taxon>Haplorrhini</taxon>
        <taxon>Catarrhini</taxon>
        <taxon>Hominidae</taxon>
        <taxon>Homo</taxon>
    </lineage>
</organism>
<accession>Q19AV6</accession>
<evidence type="ECO:0000255" key="1">
    <source>
        <dbReference type="PROSITE-ProRule" id="PRU00325"/>
    </source>
</evidence>
<evidence type="ECO:0000269" key="2">
    <source>
    </source>
</evidence>
<evidence type="ECO:0000269" key="3">
    <source>
    </source>
</evidence>
<evidence type="ECO:0000269" key="4">
    <source>
    </source>
</evidence>
<evidence type="ECO:0000269" key="5">
    <source>
    </source>
</evidence>
<evidence type="ECO:0000269" key="6">
    <source>
    </source>
</evidence>
<evidence type="ECO:0000305" key="7"/>
<feature type="chain" id="PRO_0000307403" description="Zinc finger SWIM domain-containing protein 7">
    <location>
        <begin position="1"/>
        <end position="140"/>
    </location>
</feature>
<feature type="zinc finger region" description="SWIM-type" evidence="1">
    <location>
        <begin position="66"/>
        <end position="114"/>
    </location>
</feature>
<feature type="sequence variant" id="VAR_087123" description="In ODG10." evidence="6">
    <location>
        <begin position="58"/>
        <end position="140"/>
    </location>
</feature>
<name>ZSWM7_HUMAN</name>
<sequence length="140" mass="15386">MAVVLPAVVEELLSEMAAAVQESARIPDEYLLSLKFLFGSSATQALDLVDRQSITLISSPSGRRVYQVLGSSSKTYTCLASCHYCSCPAFAFSVLRKSDSILCKHLLAVYLSQVMRTCQQLSVSDKQLTDILLMEKKQEA</sequence>
<keyword id="KW-0225">Disease variant</keyword>
<keyword id="KW-0227">DNA damage</keyword>
<keyword id="KW-0233">DNA recombination</keyword>
<keyword id="KW-0234">DNA repair</keyword>
<keyword id="KW-0479">Metal-binding</keyword>
<keyword id="KW-0539">Nucleus</keyword>
<keyword id="KW-1267">Proteomics identification</keyword>
<keyword id="KW-1185">Reference proteome</keyword>
<keyword id="KW-0862">Zinc</keyword>
<keyword id="KW-0863">Zinc-finger</keyword>
<protein>
    <recommendedName>
        <fullName>Zinc finger SWIM domain-containing protein 7</fullName>
    </recommendedName>
    <alternativeName>
        <fullName>SWIM domain-containing and Srs2-interacting protein 1 homolog</fullName>
    </alternativeName>
    <alternativeName>
        <fullName>SWIM-type zinc finger domain-containing protein 7</fullName>
    </alternativeName>
</protein>
<comment type="function">
    <text evidence="2 3 4 5 6">Involved in early stages of the homologous recombination repair (HRR) pathway of double-stranded DNA breaks arising during DNA replication or induced by DNA-damaging agents. Required for meiotic progression, hence for fertility (PubMed:32719396, PubMed:33713115, PubMed:34402903).</text>
</comment>
<comment type="subunit">
    <text evidence="2 3">Interacts with RAD51D and XRCC3; involved in homologous recombination repair. Interacts with SWSAP1; they form a functional complex involved in homologous recombination repair and stabilize each other.</text>
</comment>
<comment type="interaction">
    <interactant intactId="EBI-5281647">
        <id>Q19AV6</id>
    </interactant>
    <interactant intactId="EBI-11318692">
        <id>Q14159</id>
        <label>SPIDR</label>
    </interactant>
    <organismsDiffer>false</organismsDiffer>
    <experiments>8</experiments>
</comment>
<comment type="interaction">
    <interactant intactId="EBI-5281647">
        <id>Q19AV6</id>
    </interactant>
    <interactant intactId="EBI-5281637">
        <id>Q6NVH7</id>
        <label>SWSAP1</label>
    </interactant>
    <organismsDiffer>false</organismsDiffer>
    <experiments>18</experiments>
</comment>
<comment type="interaction">
    <interactant intactId="EBI-5281647">
        <id>Q19AV6</id>
    </interactant>
    <interactant intactId="EBI-743128">
        <id>P14927</id>
        <label>UQCRB</label>
    </interactant>
    <organismsDiffer>false</organismsDiffer>
    <experiments>3</experiments>
</comment>
<comment type="subcellular location">
    <subcellularLocation>
        <location evidence="7">Nucleus</location>
    </subcellularLocation>
</comment>
<comment type="tissue specificity">
    <text evidence="6">Expressed in ovary and testis.</text>
</comment>
<comment type="developmental stage">
    <text evidence="6">Expressed in fetal testis and ovary. In the developing ovary, detected at least from Carnegie stages (CS) 22/23. Expression seems to peak at 15/16 weeks post conception (wpc) (PubMed:34402903). In the developing testis, expressed at CS22/23 and until at least 19/20 wpc (PubMed:34402903).</text>
</comment>
<comment type="disease" evidence="6">
    <disease id="DI-06394">
        <name>Ovarian dysgenesis 10</name>
        <acronym>ODG10</acronym>
        <description>An autosomal recessive form of ovarian dysgenesis, a disorder characterized by lack of spontaneous pubertal development, primary amenorrhea, uterine hypoplasia, and hypergonadotropic hypogonadism as a result of streak gonads.</description>
        <dbReference type="MIM" id="619834"/>
    </disease>
    <text>The disease is caused by variants affecting the gene represented in this entry.</text>
</comment>
<comment type="disease" evidence="4 5">
    <disease id="DI-06392">
        <name>Spermatogenic failure 71</name>
        <acronym>SPGF71</acronym>
        <description>An autosomal recessive male infertility disorder characterized by non-obstructive azoospermia.</description>
        <dbReference type="MIM" id="619831"/>
    </disease>
    <text>The disease is caused by variants affecting the gene represented in this entry.</text>
</comment>
<comment type="similarity">
    <text evidence="7">Belongs to the SWS1 family.</text>
</comment>
<reference key="1">
    <citation type="journal article" date="2006" name="EMBO J.">
        <title>Sws1 is a conserved regulator of homologous recombination in eukaryotic cells.</title>
        <authorList>
            <person name="Martin V."/>
            <person name="Chahwan C."/>
            <person name="Gao H."/>
            <person name="Blais V."/>
            <person name="Wohlschlegel J."/>
            <person name="Yates J.R. III"/>
            <person name="McGowan C.H."/>
            <person name="Russell P."/>
        </authorList>
    </citation>
    <scope>NUCLEOTIDE SEQUENCE [MRNA]</scope>
    <scope>FUNCTION</scope>
    <scope>INTERACTION WITH RAD51D</scope>
</reference>
<reference key="2">
    <citation type="journal article" date="2011" name="J. Biol. Chem.">
        <title>hSWS1.SWSAP1 is an evolutionarily conserved complex required for efficient homologous recombination repair.</title>
        <authorList>
            <person name="Liu T."/>
            <person name="Wan L."/>
            <person name="Wu Y."/>
            <person name="Chen J."/>
            <person name="Huang J."/>
        </authorList>
    </citation>
    <scope>FUNCTION IN HOMOLOGOUS RECOMBINATION REPAIR</scope>
    <scope>INTERACTION WITH RAD51D; SWSAP1 AND XRCC3</scope>
</reference>
<reference key="3">
    <citation type="journal article" date="2020" name="Genet. Med.">
        <title>A genomics approach to male infertility.</title>
        <authorList>
            <person name="Alhathal N."/>
            <person name="Maddirevula S."/>
            <person name="Coskun S."/>
            <person name="Alali H."/>
            <person name="Assoum M."/>
            <person name="Morris T."/>
            <person name="Deek H.A."/>
            <person name="Hamed S.A."/>
            <person name="Alsuhaibani S."/>
            <person name="Mirdawi A."/>
            <person name="Ewida N."/>
            <person name="Al-Qahtani M."/>
            <person name="Ibrahim N."/>
            <person name="Abdulwahab F."/>
            <person name="Altaweel W."/>
            <person name="Dasouki M.J."/>
            <person name="Assiri A."/>
            <person name="Qabbaj W."/>
            <person name="Alkuraya F.S."/>
        </authorList>
    </citation>
    <scope>INVOLVEMENT IN SPGF71</scope>
    <scope>FUNCTION</scope>
</reference>
<reference key="4">
    <citation type="journal article" date="2021" name="Hum. Reprod.">
        <title>A recurrent ZSWIM7 mutation causes male infertility resulting from decreased meiotic recombination.</title>
        <authorList>
            <person name="Li Y."/>
            <person name="Wu Y."/>
            <person name="Zhou J."/>
            <person name="Zhang H."/>
            <person name="Zhang Y."/>
            <person name="Ma H."/>
            <person name="Jiang X."/>
            <person name="Shi Q."/>
        </authorList>
    </citation>
    <scope>INVOLVEMENT IN SPGF71</scope>
    <scope>FUNCTION</scope>
</reference>
<reference key="5">
    <citation type="journal article" date="2022" name="J. Clin. Endocrinol. Metab.">
        <title>ZSWIM7 is associated with human female meiosis and familial primary ovarian insufficiency.</title>
        <authorList>
            <person name="McGlacken-Byrne S.M."/>
            <person name="Le Quesne Stabej P."/>
            <person name="Del Valle I."/>
            <person name="Ocaka L."/>
            <person name="Gagunashvili A."/>
            <person name="Crespo B."/>
            <person name="Moreno N."/>
            <person name="James C."/>
            <person name="Bacchelli C."/>
            <person name="Dattani M.T."/>
            <person name="Williams H.J."/>
            <person name="Kelberman D."/>
            <person name="Achermann J.C."/>
            <person name="Conway G.S."/>
        </authorList>
    </citation>
    <scope>INVOLVEMENT IN ODG10</scope>
    <scope>VARIANT ODG10 58-SER--ALA-140 DEL</scope>
    <scope>FUNCTION</scope>
    <scope>TISSUE SPECIFICITY</scope>
    <scope>DEVELOPMENTAL STAGE</scope>
</reference>